<proteinExistence type="inferred from homology"/>
<reference key="1">
    <citation type="submission" date="2000-03" db="EMBL/GenBank/DDBJ databases">
        <authorList>
            <person name="Saunders D.C."/>
            <person name="Harris D."/>
        </authorList>
    </citation>
    <scope>NUCLEOTIDE SEQUENCE [GENOMIC DNA]</scope>
    <source>
        <strain>A3(2) / NRRL B-16638</strain>
    </source>
</reference>
<reference key="2">
    <citation type="submission" date="2000-03" db="EMBL/GenBank/DDBJ databases">
        <authorList>
            <person name="Cerdeno A.M."/>
            <person name="Parkhill J."/>
            <person name="Barrell B.G."/>
            <person name="Rajandream M.A."/>
        </authorList>
    </citation>
    <scope>NUCLEOTIDE SEQUENCE [GENOMIC DNA]</scope>
    <source>
        <strain>A3(2) / NRRL B-16638</strain>
    </source>
</reference>
<reference key="3">
    <citation type="journal article" date="1996" name="Mol. Microbiol.">
        <title>A set of ordered cosmids and a detailed genetic and physical map for the 8 Mb Streptomyces coelicolor A3(2) chromosome.</title>
        <authorList>
            <person name="Redenbach M."/>
            <person name="Kieser H.M."/>
            <person name="Denapaite D."/>
            <person name="Eichner A."/>
            <person name="Cullum J."/>
            <person name="Kinashi H."/>
            <person name="Hopwood D.A."/>
        </authorList>
    </citation>
    <scope>NUCLEOTIDE SEQUENCE [GENOMIC DNA]</scope>
    <source>
        <strain>A3(2) / NRRL B-16638</strain>
    </source>
</reference>
<reference key="4">
    <citation type="journal article" date="2002" name="Nature">
        <title>Complete genome sequence of the model actinomycete Streptomyces coelicolor A3(2).</title>
        <authorList>
            <person name="Bentley S.D."/>
            <person name="Chater K.F."/>
            <person name="Cerdeno-Tarraga A.-M."/>
            <person name="Challis G.L."/>
            <person name="Thomson N.R."/>
            <person name="James K.D."/>
            <person name="Harris D.E."/>
            <person name="Quail M.A."/>
            <person name="Kieser H."/>
            <person name="Harper D."/>
            <person name="Bateman A."/>
            <person name="Brown S."/>
            <person name="Chandra G."/>
            <person name="Chen C.W."/>
            <person name="Collins M."/>
            <person name="Cronin A."/>
            <person name="Fraser A."/>
            <person name="Goble A."/>
            <person name="Hidalgo J."/>
            <person name="Hornsby T."/>
            <person name="Howarth S."/>
            <person name="Huang C.-H."/>
            <person name="Kieser T."/>
            <person name="Larke L."/>
            <person name="Murphy L.D."/>
            <person name="Oliver K."/>
            <person name="O'Neil S."/>
            <person name="Rabbinowitsch E."/>
            <person name="Rajandream M.A."/>
            <person name="Rutherford K.M."/>
            <person name="Rutter S."/>
            <person name="Seeger K."/>
            <person name="Saunders D."/>
            <person name="Sharp S."/>
            <person name="Squares R."/>
            <person name="Squares S."/>
            <person name="Taylor K."/>
            <person name="Warren T."/>
            <person name="Wietzorrek A."/>
            <person name="Woodward J.R."/>
            <person name="Barrell B.G."/>
            <person name="Parkhill J."/>
            <person name="Hopwood D.A."/>
        </authorList>
    </citation>
    <scope>NUCLEOTIDE SEQUENCE [LARGE SCALE GENOMIC DNA]</scope>
    <source>
        <strain>ATCC BAA-471 / A3(2) / M145</strain>
    </source>
</reference>
<name>RL24_STRCO</name>
<gene>
    <name evidence="1" type="primary">rplX</name>
    <name type="ordered locus">SCO4713</name>
    <name type="ORF">SCD31.38</name>
</gene>
<keyword id="KW-1185">Reference proteome</keyword>
<keyword id="KW-0687">Ribonucleoprotein</keyword>
<keyword id="KW-0689">Ribosomal protein</keyword>
<keyword id="KW-0694">RNA-binding</keyword>
<keyword id="KW-0699">rRNA-binding</keyword>
<sequence length="107" mass="11590">MKIKKGDLVQVITGKDKGKQGKVIAAFPREDRVLVEGVNRVKKHTKAGPTARGSQAGGIVTTEAPIHVSNVQLVVEKDGNKVVTRVGYRFDDEGNKVRVAKRTGEDI</sequence>
<dbReference type="EMBL" id="AL939121">
    <property type="protein sequence ID" value="CAB82081.1"/>
    <property type="molecule type" value="Genomic_DNA"/>
</dbReference>
<dbReference type="RefSeq" id="NP_628872.1">
    <property type="nucleotide sequence ID" value="NC_003888.3"/>
</dbReference>
<dbReference type="RefSeq" id="WP_003974256.1">
    <property type="nucleotide sequence ID" value="NZ_VNID01000016.1"/>
</dbReference>
<dbReference type="SMR" id="Q9L0C9"/>
<dbReference type="FunCoup" id="Q9L0C9">
    <property type="interactions" value="158"/>
</dbReference>
<dbReference type="STRING" id="100226.gene:17762362"/>
<dbReference type="PaxDb" id="100226-SCO4713"/>
<dbReference type="GeneID" id="97462947"/>
<dbReference type="KEGG" id="sco:SCO4713"/>
<dbReference type="PATRIC" id="fig|100226.15.peg.4784"/>
<dbReference type="eggNOG" id="COG0198">
    <property type="taxonomic scope" value="Bacteria"/>
</dbReference>
<dbReference type="HOGENOM" id="CLU_093315_2_0_11"/>
<dbReference type="InParanoid" id="Q9L0C9"/>
<dbReference type="OrthoDB" id="9807419at2"/>
<dbReference type="PhylomeDB" id="Q9L0C9"/>
<dbReference type="Proteomes" id="UP000001973">
    <property type="component" value="Chromosome"/>
</dbReference>
<dbReference type="GO" id="GO:0022625">
    <property type="term" value="C:cytosolic large ribosomal subunit"/>
    <property type="evidence" value="ECO:0000318"/>
    <property type="project" value="GO_Central"/>
</dbReference>
<dbReference type="GO" id="GO:0019843">
    <property type="term" value="F:rRNA binding"/>
    <property type="evidence" value="ECO:0007669"/>
    <property type="project" value="UniProtKB-UniRule"/>
</dbReference>
<dbReference type="GO" id="GO:0003735">
    <property type="term" value="F:structural constituent of ribosome"/>
    <property type="evidence" value="ECO:0007669"/>
    <property type="project" value="InterPro"/>
</dbReference>
<dbReference type="GO" id="GO:0006412">
    <property type="term" value="P:translation"/>
    <property type="evidence" value="ECO:0000318"/>
    <property type="project" value="GO_Central"/>
</dbReference>
<dbReference type="CDD" id="cd06089">
    <property type="entry name" value="KOW_RPL26"/>
    <property type="match status" value="1"/>
</dbReference>
<dbReference type="FunFam" id="2.30.30.30:FF:000004">
    <property type="entry name" value="50S ribosomal protein L24"/>
    <property type="match status" value="1"/>
</dbReference>
<dbReference type="Gene3D" id="2.30.30.30">
    <property type="match status" value="1"/>
</dbReference>
<dbReference type="HAMAP" id="MF_01326_B">
    <property type="entry name" value="Ribosomal_uL24_B"/>
    <property type="match status" value="1"/>
</dbReference>
<dbReference type="InterPro" id="IPR005824">
    <property type="entry name" value="KOW"/>
</dbReference>
<dbReference type="InterPro" id="IPR014722">
    <property type="entry name" value="Rib_uL2_dom2"/>
</dbReference>
<dbReference type="InterPro" id="IPR003256">
    <property type="entry name" value="Ribosomal_uL24"/>
</dbReference>
<dbReference type="InterPro" id="IPR005825">
    <property type="entry name" value="Ribosomal_uL24_CS"/>
</dbReference>
<dbReference type="InterPro" id="IPR041988">
    <property type="entry name" value="Ribosomal_uL24_KOW"/>
</dbReference>
<dbReference type="InterPro" id="IPR008991">
    <property type="entry name" value="Translation_prot_SH3-like_sf"/>
</dbReference>
<dbReference type="NCBIfam" id="TIGR01079">
    <property type="entry name" value="rplX_bact"/>
    <property type="match status" value="1"/>
</dbReference>
<dbReference type="PANTHER" id="PTHR12903">
    <property type="entry name" value="MITOCHONDRIAL RIBOSOMAL PROTEIN L24"/>
    <property type="match status" value="1"/>
</dbReference>
<dbReference type="Pfam" id="PF00467">
    <property type="entry name" value="KOW"/>
    <property type="match status" value="1"/>
</dbReference>
<dbReference type="Pfam" id="PF17136">
    <property type="entry name" value="ribosomal_L24"/>
    <property type="match status" value="1"/>
</dbReference>
<dbReference type="SMART" id="SM00739">
    <property type="entry name" value="KOW"/>
    <property type="match status" value="1"/>
</dbReference>
<dbReference type="SUPFAM" id="SSF50104">
    <property type="entry name" value="Translation proteins SH3-like domain"/>
    <property type="match status" value="1"/>
</dbReference>
<dbReference type="PROSITE" id="PS01108">
    <property type="entry name" value="RIBOSOMAL_L24"/>
    <property type="match status" value="1"/>
</dbReference>
<organism>
    <name type="scientific">Streptomyces coelicolor (strain ATCC BAA-471 / A3(2) / M145)</name>
    <dbReference type="NCBI Taxonomy" id="100226"/>
    <lineage>
        <taxon>Bacteria</taxon>
        <taxon>Bacillati</taxon>
        <taxon>Actinomycetota</taxon>
        <taxon>Actinomycetes</taxon>
        <taxon>Kitasatosporales</taxon>
        <taxon>Streptomycetaceae</taxon>
        <taxon>Streptomyces</taxon>
        <taxon>Streptomyces albidoflavus group</taxon>
    </lineage>
</organism>
<protein>
    <recommendedName>
        <fullName evidence="1">Large ribosomal subunit protein uL24</fullName>
    </recommendedName>
    <alternativeName>
        <fullName evidence="2">50S ribosomal protein L24</fullName>
    </alternativeName>
</protein>
<comment type="function">
    <text evidence="1">One of two assembly initiator proteins, it binds directly to the 5'-end of the 23S rRNA, where it nucleates assembly of the 50S subunit.</text>
</comment>
<comment type="function">
    <text evidence="1">One of the proteins that surrounds the polypeptide exit tunnel on the outside of the subunit.</text>
</comment>
<comment type="subunit">
    <text evidence="1">Part of the 50S ribosomal subunit.</text>
</comment>
<comment type="similarity">
    <text evidence="1">Belongs to the universal ribosomal protein uL24 family.</text>
</comment>
<accession>Q9L0C9</accession>
<feature type="chain" id="PRO_0000130727" description="Large ribosomal subunit protein uL24">
    <location>
        <begin position="1"/>
        <end position="107"/>
    </location>
</feature>
<evidence type="ECO:0000255" key="1">
    <source>
        <dbReference type="HAMAP-Rule" id="MF_01326"/>
    </source>
</evidence>
<evidence type="ECO:0000305" key="2"/>